<name>FLUC2_CORDI</name>
<sequence length="104" mass="10832">MIPALFLAAALGGMLRFLLSKIGPYVGTFIANMAACVVLAAVRDASPLVMAAVGTGFAGALSTWSTLAKELGTLIRQRRWAMLLGYTTATILGGMVAVWCGLQI</sequence>
<keyword id="KW-1003">Cell membrane</keyword>
<keyword id="KW-0407">Ion channel</keyword>
<keyword id="KW-0406">Ion transport</keyword>
<keyword id="KW-0472">Membrane</keyword>
<keyword id="KW-0479">Metal-binding</keyword>
<keyword id="KW-1185">Reference proteome</keyword>
<keyword id="KW-0915">Sodium</keyword>
<keyword id="KW-0812">Transmembrane</keyword>
<keyword id="KW-1133">Transmembrane helix</keyword>
<keyword id="KW-0813">Transport</keyword>
<reference key="1">
    <citation type="journal article" date="2003" name="Nucleic Acids Res.">
        <title>The complete genome sequence and analysis of Corynebacterium diphtheriae NCTC13129.</title>
        <authorList>
            <person name="Cerdeno-Tarraga A.-M."/>
            <person name="Efstratiou A."/>
            <person name="Dover L.G."/>
            <person name="Holden M.T.G."/>
            <person name="Pallen M.J."/>
            <person name="Bentley S.D."/>
            <person name="Besra G.S."/>
            <person name="Churcher C.M."/>
            <person name="James K.D."/>
            <person name="De Zoysa A."/>
            <person name="Chillingworth T."/>
            <person name="Cronin A."/>
            <person name="Dowd L."/>
            <person name="Feltwell T."/>
            <person name="Hamlin N."/>
            <person name="Holroyd S."/>
            <person name="Jagels K."/>
            <person name="Moule S."/>
            <person name="Quail M.A."/>
            <person name="Rabbinowitsch E."/>
            <person name="Rutherford K.M."/>
            <person name="Thomson N.R."/>
            <person name="Unwin L."/>
            <person name="Whitehead S."/>
            <person name="Barrell B.G."/>
            <person name="Parkhill J."/>
        </authorList>
    </citation>
    <scope>NUCLEOTIDE SEQUENCE [LARGE SCALE GENOMIC DNA]</scope>
    <source>
        <strain>ATCC 700971 / NCTC 13129 / Biotype gravis</strain>
    </source>
</reference>
<evidence type="ECO:0000255" key="1">
    <source>
        <dbReference type="HAMAP-Rule" id="MF_00454"/>
    </source>
</evidence>
<dbReference type="EMBL" id="BX248359">
    <property type="protein sequence ID" value="CAE50413.1"/>
    <property type="molecule type" value="Genomic_DNA"/>
</dbReference>
<dbReference type="RefSeq" id="WP_010935403.1">
    <property type="nucleotide sequence ID" value="NC_002935.2"/>
</dbReference>
<dbReference type="SMR" id="P61784"/>
<dbReference type="STRING" id="257309.DIP1884"/>
<dbReference type="KEGG" id="cdi:DIP1884"/>
<dbReference type="HOGENOM" id="CLU_114342_2_2_11"/>
<dbReference type="Proteomes" id="UP000002198">
    <property type="component" value="Chromosome"/>
</dbReference>
<dbReference type="GO" id="GO:0005886">
    <property type="term" value="C:plasma membrane"/>
    <property type="evidence" value="ECO:0007669"/>
    <property type="project" value="UniProtKB-SubCell"/>
</dbReference>
<dbReference type="GO" id="GO:0062054">
    <property type="term" value="F:fluoride channel activity"/>
    <property type="evidence" value="ECO:0007669"/>
    <property type="project" value="UniProtKB-UniRule"/>
</dbReference>
<dbReference type="GO" id="GO:0046872">
    <property type="term" value="F:metal ion binding"/>
    <property type="evidence" value="ECO:0007669"/>
    <property type="project" value="UniProtKB-KW"/>
</dbReference>
<dbReference type="GO" id="GO:0140114">
    <property type="term" value="P:cellular detoxification of fluoride"/>
    <property type="evidence" value="ECO:0007669"/>
    <property type="project" value="UniProtKB-UniRule"/>
</dbReference>
<dbReference type="HAMAP" id="MF_00454">
    <property type="entry name" value="FluC"/>
    <property type="match status" value="1"/>
</dbReference>
<dbReference type="InterPro" id="IPR003691">
    <property type="entry name" value="FluC"/>
</dbReference>
<dbReference type="PANTHER" id="PTHR28259">
    <property type="entry name" value="FLUORIDE EXPORT PROTEIN 1-RELATED"/>
    <property type="match status" value="1"/>
</dbReference>
<dbReference type="PANTHER" id="PTHR28259:SF1">
    <property type="entry name" value="FLUORIDE EXPORT PROTEIN 1-RELATED"/>
    <property type="match status" value="1"/>
</dbReference>
<dbReference type="Pfam" id="PF02537">
    <property type="entry name" value="CRCB"/>
    <property type="match status" value="1"/>
</dbReference>
<proteinExistence type="inferred from homology"/>
<organism>
    <name type="scientific">Corynebacterium diphtheriae (strain ATCC 700971 / NCTC 13129 / Biotype gravis)</name>
    <dbReference type="NCBI Taxonomy" id="257309"/>
    <lineage>
        <taxon>Bacteria</taxon>
        <taxon>Bacillati</taxon>
        <taxon>Actinomycetota</taxon>
        <taxon>Actinomycetes</taxon>
        <taxon>Mycobacteriales</taxon>
        <taxon>Corynebacteriaceae</taxon>
        <taxon>Corynebacterium</taxon>
    </lineage>
</organism>
<gene>
    <name evidence="1" type="primary">fluC2</name>
    <name evidence="1" type="synonym">crcB2</name>
    <name type="ordered locus">DIP1884</name>
</gene>
<accession>P61784</accession>
<feature type="chain" id="PRO_0000110090" description="Fluoride-specific ion channel FluC 2">
    <location>
        <begin position="1"/>
        <end position="104"/>
    </location>
</feature>
<feature type="transmembrane region" description="Helical" evidence="1">
    <location>
        <begin position="22"/>
        <end position="42"/>
    </location>
</feature>
<feature type="transmembrane region" description="Helical" evidence="1">
    <location>
        <begin position="48"/>
        <end position="68"/>
    </location>
</feature>
<feature type="transmembrane region" description="Helical" evidence="1">
    <location>
        <begin position="82"/>
        <end position="102"/>
    </location>
</feature>
<feature type="binding site" evidence="1">
    <location>
        <position position="59"/>
    </location>
    <ligand>
        <name>Na(+)</name>
        <dbReference type="ChEBI" id="CHEBI:29101"/>
        <note>structural</note>
    </ligand>
</feature>
<feature type="binding site" evidence="1">
    <location>
        <position position="62"/>
    </location>
    <ligand>
        <name>Na(+)</name>
        <dbReference type="ChEBI" id="CHEBI:29101"/>
        <note>structural</note>
    </ligand>
</feature>
<protein>
    <recommendedName>
        <fullName evidence="1">Fluoride-specific ion channel FluC 2</fullName>
    </recommendedName>
</protein>
<comment type="function">
    <text evidence="1">Fluoride-specific ion channel. Important for reducing fluoride concentration in the cell, thus reducing its toxicity.</text>
</comment>
<comment type="catalytic activity">
    <reaction evidence="1">
        <text>fluoride(in) = fluoride(out)</text>
        <dbReference type="Rhea" id="RHEA:76159"/>
        <dbReference type="ChEBI" id="CHEBI:17051"/>
    </reaction>
    <physiologicalReaction direction="left-to-right" evidence="1">
        <dbReference type="Rhea" id="RHEA:76160"/>
    </physiologicalReaction>
</comment>
<comment type="activity regulation">
    <text evidence="1">Na(+) is not transported, but it plays an essential structural role and its presence is essential for fluoride channel function.</text>
</comment>
<comment type="subcellular location">
    <subcellularLocation>
        <location evidence="1">Cell membrane</location>
        <topology evidence="1">Multi-pass membrane protein</topology>
    </subcellularLocation>
</comment>
<comment type="similarity">
    <text evidence="1">Belongs to the fluoride channel Fluc/FEX (TC 1.A.43) family.</text>
</comment>